<name>ARLY_METPB</name>
<reference key="1">
    <citation type="submission" date="2008-04" db="EMBL/GenBank/DDBJ databases">
        <title>Complete sequence of chromosome of Methylobacterium populi BJ001.</title>
        <authorList>
            <consortium name="US DOE Joint Genome Institute"/>
            <person name="Copeland A."/>
            <person name="Lucas S."/>
            <person name="Lapidus A."/>
            <person name="Glavina del Rio T."/>
            <person name="Dalin E."/>
            <person name="Tice H."/>
            <person name="Bruce D."/>
            <person name="Goodwin L."/>
            <person name="Pitluck S."/>
            <person name="Chertkov O."/>
            <person name="Brettin T."/>
            <person name="Detter J.C."/>
            <person name="Han C."/>
            <person name="Kuske C.R."/>
            <person name="Schmutz J."/>
            <person name="Larimer F."/>
            <person name="Land M."/>
            <person name="Hauser L."/>
            <person name="Kyrpides N."/>
            <person name="Mikhailova N."/>
            <person name="Marx C."/>
            <person name="Richardson P."/>
        </authorList>
    </citation>
    <scope>NUCLEOTIDE SEQUENCE [LARGE SCALE GENOMIC DNA]</scope>
    <source>
        <strain>ATCC BAA-705 / NCIMB 13946 / BJ001</strain>
    </source>
</reference>
<dbReference type="EC" id="4.3.2.1" evidence="1"/>
<dbReference type="EMBL" id="CP001029">
    <property type="protein sequence ID" value="ACB81639.1"/>
    <property type="molecule type" value="Genomic_DNA"/>
</dbReference>
<dbReference type="RefSeq" id="WP_012455355.1">
    <property type="nucleotide sequence ID" value="NC_010725.1"/>
</dbReference>
<dbReference type="SMR" id="B1ZKR9"/>
<dbReference type="STRING" id="441620.Mpop_3489"/>
<dbReference type="KEGG" id="mpo:Mpop_3489"/>
<dbReference type="eggNOG" id="COG0165">
    <property type="taxonomic scope" value="Bacteria"/>
</dbReference>
<dbReference type="HOGENOM" id="CLU_027272_2_3_5"/>
<dbReference type="OrthoDB" id="9769623at2"/>
<dbReference type="UniPathway" id="UPA00068">
    <property type="reaction ID" value="UER00114"/>
</dbReference>
<dbReference type="Proteomes" id="UP000007136">
    <property type="component" value="Chromosome"/>
</dbReference>
<dbReference type="GO" id="GO:0005829">
    <property type="term" value="C:cytosol"/>
    <property type="evidence" value="ECO:0007669"/>
    <property type="project" value="TreeGrafter"/>
</dbReference>
<dbReference type="GO" id="GO:0004056">
    <property type="term" value="F:argininosuccinate lyase activity"/>
    <property type="evidence" value="ECO:0007669"/>
    <property type="project" value="UniProtKB-UniRule"/>
</dbReference>
<dbReference type="GO" id="GO:0042450">
    <property type="term" value="P:arginine biosynthetic process via ornithine"/>
    <property type="evidence" value="ECO:0007669"/>
    <property type="project" value="InterPro"/>
</dbReference>
<dbReference type="GO" id="GO:0006526">
    <property type="term" value="P:L-arginine biosynthetic process"/>
    <property type="evidence" value="ECO:0007669"/>
    <property type="project" value="UniProtKB-UniRule"/>
</dbReference>
<dbReference type="CDD" id="cd01359">
    <property type="entry name" value="Argininosuccinate_lyase"/>
    <property type="match status" value="1"/>
</dbReference>
<dbReference type="FunFam" id="1.10.275.10:FF:000002">
    <property type="entry name" value="Argininosuccinate lyase"/>
    <property type="match status" value="1"/>
</dbReference>
<dbReference type="FunFam" id="1.10.40.30:FF:000001">
    <property type="entry name" value="Argininosuccinate lyase"/>
    <property type="match status" value="1"/>
</dbReference>
<dbReference type="FunFam" id="1.20.200.10:FF:000006">
    <property type="entry name" value="Argininosuccinate lyase"/>
    <property type="match status" value="1"/>
</dbReference>
<dbReference type="Gene3D" id="1.10.40.30">
    <property type="entry name" value="Fumarase/aspartase (C-terminal domain)"/>
    <property type="match status" value="1"/>
</dbReference>
<dbReference type="Gene3D" id="1.20.200.10">
    <property type="entry name" value="Fumarase/aspartase (Central domain)"/>
    <property type="match status" value="1"/>
</dbReference>
<dbReference type="Gene3D" id="1.10.275.10">
    <property type="entry name" value="Fumarase/aspartase (N-terminal domain)"/>
    <property type="match status" value="1"/>
</dbReference>
<dbReference type="HAMAP" id="MF_00006">
    <property type="entry name" value="Arg_succ_lyase"/>
    <property type="match status" value="1"/>
</dbReference>
<dbReference type="InterPro" id="IPR029419">
    <property type="entry name" value="Arg_succ_lyase_C"/>
</dbReference>
<dbReference type="InterPro" id="IPR009049">
    <property type="entry name" value="Argininosuccinate_lyase"/>
</dbReference>
<dbReference type="InterPro" id="IPR024083">
    <property type="entry name" value="Fumarase/histidase_N"/>
</dbReference>
<dbReference type="InterPro" id="IPR020557">
    <property type="entry name" value="Fumarate_lyase_CS"/>
</dbReference>
<dbReference type="InterPro" id="IPR000362">
    <property type="entry name" value="Fumarate_lyase_fam"/>
</dbReference>
<dbReference type="InterPro" id="IPR022761">
    <property type="entry name" value="Fumarate_lyase_N"/>
</dbReference>
<dbReference type="InterPro" id="IPR008948">
    <property type="entry name" value="L-Aspartase-like"/>
</dbReference>
<dbReference type="NCBIfam" id="TIGR00838">
    <property type="entry name" value="argH"/>
    <property type="match status" value="1"/>
</dbReference>
<dbReference type="PANTHER" id="PTHR43814">
    <property type="entry name" value="ARGININOSUCCINATE LYASE"/>
    <property type="match status" value="1"/>
</dbReference>
<dbReference type="PANTHER" id="PTHR43814:SF1">
    <property type="entry name" value="ARGININOSUCCINATE LYASE"/>
    <property type="match status" value="1"/>
</dbReference>
<dbReference type="Pfam" id="PF14698">
    <property type="entry name" value="ASL_C2"/>
    <property type="match status" value="1"/>
</dbReference>
<dbReference type="Pfam" id="PF00206">
    <property type="entry name" value="Lyase_1"/>
    <property type="match status" value="1"/>
</dbReference>
<dbReference type="PRINTS" id="PR00145">
    <property type="entry name" value="ARGSUCLYASE"/>
</dbReference>
<dbReference type="PRINTS" id="PR00149">
    <property type="entry name" value="FUMRATELYASE"/>
</dbReference>
<dbReference type="SUPFAM" id="SSF48557">
    <property type="entry name" value="L-aspartase-like"/>
    <property type="match status" value="1"/>
</dbReference>
<dbReference type="PROSITE" id="PS00163">
    <property type="entry name" value="FUMARATE_LYASES"/>
    <property type="match status" value="1"/>
</dbReference>
<accession>B1ZKR9</accession>
<sequence>MSNRMWGGRFASGPAEIMEEINASIGFDRRLAPQDIRGSLAHVAMLGSRGILPAEDVAAIEAGLKSVEAEIERGEFVFRRELEDIHMAVESRLTEIVGPAAGRLHTARSRNDQVATDMRLWVRDTLDALDAQVADLQRALAETAQKHADTVMPGFTHLQSAQPVTFGHHCLAYVEMLARDRGRFRDARARLNECPLGSAALAGTSFPIDRHATAAALGFDRPTANSLDSVADRDFALESLSAASICAVHLSRFAEELVVWTSAQFGFVRLSDRFTTGSSIMPQKRNPDAAELVRAKAGRIIGALTGLLVVMKGLPLAYSKDMQEDKEGTFDALQSLSLCLAAMAGMVRDLEPVAETLKRAAGSGYATATDLADWLVRELNMPFRQAHHVTGRVVAAASERGIGLEDLSLDAMQAIEPGITQAVFAVLGVENSVASRTSYGGTAPDNVRRQAQAWLERLGPVEK</sequence>
<evidence type="ECO:0000255" key="1">
    <source>
        <dbReference type="HAMAP-Rule" id="MF_00006"/>
    </source>
</evidence>
<keyword id="KW-0028">Amino-acid biosynthesis</keyword>
<keyword id="KW-0055">Arginine biosynthesis</keyword>
<keyword id="KW-0963">Cytoplasm</keyword>
<keyword id="KW-0456">Lyase</keyword>
<gene>
    <name evidence="1" type="primary">argH</name>
    <name type="ordered locus">Mpop_3489</name>
</gene>
<comment type="catalytic activity">
    <reaction evidence="1">
        <text>2-(N(omega)-L-arginino)succinate = fumarate + L-arginine</text>
        <dbReference type="Rhea" id="RHEA:24020"/>
        <dbReference type="ChEBI" id="CHEBI:29806"/>
        <dbReference type="ChEBI" id="CHEBI:32682"/>
        <dbReference type="ChEBI" id="CHEBI:57472"/>
        <dbReference type="EC" id="4.3.2.1"/>
    </reaction>
</comment>
<comment type="pathway">
    <text evidence="1">Amino-acid biosynthesis; L-arginine biosynthesis; L-arginine from L-ornithine and carbamoyl phosphate: step 3/3.</text>
</comment>
<comment type="subcellular location">
    <subcellularLocation>
        <location evidence="1">Cytoplasm</location>
    </subcellularLocation>
</comment>
<comment type="similarity">
    <text evidence="1">Belongs to the lyase 1 family. Argininosuccinate lyase subfamily.</text>
</comment>
<proteinExistence type="inferred from homology"/>
<protein>
    <recommendedName>
        <fullName evidence="1">Argininosuccinate lyase</fullName>
        <shortName evidence="1">ASAL</shortName>
        <ecNumber evidence="1">4.3.2.1</ecNumber>
    </recommendedName>
    <alternativeName>
        <fullName evidence="1">Arginosuccinase</fullName>
    </alternativeName>
</protein>
<organism>
    <name type="scientific">Methylorubrum populi (strain ATCC BAA-705 / NCIMB 13946 / BJ001)</name>
    <name type="common">Methylobacterium populi</name>
    <dbReference type="NCBI Taxonomy" id="441620"/>
    <lineage>
        <taxon>Bacteria</taxon>
        <taxon>Pseudomonadati</taxon>
        <taxon>Pseudomonadota</taxon>
        <taxon>Alphaproteobacteria</taxon>
        <taxon>Hyphomicrobiales</taxon>
        <taxon>Methylobacteriaceae</taxon>
        <taxon>Methylorubrum</taxon>
    </lineage>
</organism>
<feature type="chain" id="PRO_1000089093" description="Argininosuccinate lyase">
    <location>
        <begin position="1"/>
        <end position="463"/>
    </location>
</feature>